<comment type="function">
    <text evidence="4 5 8 9 11 13 15">Chromatin-interacting protein that forms a stable heterodimer with interleukin enhancer-binding factor 3/ILF3 and plays a role in several biological processes including transcription, innate immunity or cell growth (PubMed:18458058, PubMed:31212927). Essential for the efficient reshuttling of ILF3 (isoform 1 and isoform 2) into the nucleus. Together with ILF3, forms an RNA-binding complex that is required for mitotic progression and cytokinesis by regulating the expression of a cluster of mitotic genes. Mechanistically, competes with STAU1/STAU2-mediated mRNA decay (PubMed:32433969). Also plays a role in the inhibition of various viruses including Japanese encephalitis virus or enterovirus 71.</text>
</comment>
<comment type="function">
    <text evidence="10">(Microbial infection) Plays a positive role in HIV-1 virus production by binding to and thereby stabilizing HIV-1 RNA, together with ILF3.</text>
</comment>
<comment type="subunit">
    <text evidence="4 5 6 7 8 14 15">Forms heterodimers with ILF3 (PubMed:18458058). ILF2-ILF3 heterodimers may also bind to PRKDC/XRCC7: this may stabilize the interaction of PRKDC/XRCC7 and the heterodimeric complex of G22P1/KU70 and XRCC5/KU80. Forms a complex with ILF3, YLPM1, KHDRBS1, RBMX, NCOA5 and PPP1CA. Identified in a IGF2BP1-dependent mRNP granule complex containing untranslated mRNAs. Interacts with IGF2BP1. Interacts with CRBN; this interaction promotes ubiquitination and subsequent degradation of ILF2 (PubMed:33009960).</text>
</comment>
<comment type="subunit">
    <text evidence="11">(Microbial infection) Interacts with Japanese encephalitis virus protein NS3.</text>
</comment>
<comment type="subunit">
    <text evidence="12">(Microbial infection) Interacts with enterovirus 71 protein 2B; this interaction relocalizes ILF2 from the nucleus to the cytoplasm.</text>
</comment>
<comment type="interaction">
    <interactant intactId="EBI-357925">
        <id>Q12905</id>
    </interactant>
    <interactant intactId="EBI-6509505">
        <id>Q0VD86</id>
        <label>INCA1</label>
    </interactant>
    <organismsDiffer>false</organismsDiffer>
    <experiments>3</experiments>
</comment>
<comment type="interaction">
    <interactant intactId="EBI-357925">
        <id>Q12905</id>
    </interactant>
    <interactant intactId="EBI-297509">
        <id>P46940</id>
        <label>IQGAP1</label>
    </interactant>
    <organismsDiffer>false</organismsDiffer>
    <experiments>3</experiments>
</comment>
<comment type="interaction">
    <interactant intactId="EBI-357925">
        <id>Q12905</id>
    </interactant>
    <interactant intactId="EBI-22311199">
        <id>Q3LI67</id>
        <label>KRTAP6-3</label>
    </interactant>
    <organismsDiffer>false</organismsDiffer>
    <experiments>3</experiments>
</comment>
<comment type="interaction">
    <interactant intactId="EBI-357925">
        <id>Q12905</id>
    </interactant>
    <interactant intactId="EBI-16439278">
        <id>Q6FHY5</id>
        <label>MEOX2</label>
    </interactant>
    <organismsDiffer>false</organismsDiffer>
    <experiments>3</experiments>
</comment>
<comment type="interaction">
    <interactant intactId="EBI-357925">
        <id>Q12905</id>
    </interactant>
    <interactant intactId="EBI-79165">
        <id>Q9NRD5</id>
        <label>PICK1</label>
    </interactant>
    <organismsDiffer>false</organismsDiffer>
    <experiments>3</experiments>
</comment>
<comment type="interaction">
    <interactant intactId="EBI-357925">
        <id>Q12905</id>
    </interactant>
    <interactant intactId="EBI-716596">
        <id>Q08752</id>
        <label>PPID</label>
    </interactant>
    <organismsDiffer>false</organismsDiffer>
    <experiments>4</experiments>
</comment>
<comment type="interaction">
    <interactant intactId="EBI-357925">
        <id>Q12905</id>
    </interactant>
    <interactant intactId="EBI-719493">
        <id>P14373</id>
        <label>TRIM27</label>
    </interactant>
    <organismsDiffer>false</organismsDiffer>
    <experiments>3</experiments>
</comment>
<comment type="interaction">
    <interactant intactId="EBI-357925">
        <id>Q12905</id>
    </interactant>
    <interactant intactId="EBI-12030590">
        <id>Q9H0C1</id>
        <label>ZMYND12</label>
    </interactant>
    <organismsDiffer>false</organismsDiffer>
    <experiments>3</experiments>
</comment>
<comment type="subcellular location">
    <subcellularLocation>
        <location>Nucleus</location>
        <location>Nucleolus</location>
    </subcellularLocation>
    <subcellularLocation>
        <location evidence="11 12">Cytoplasm</location>
    </subcellularLocation>
    <subcellularLocation>
        <location evidence="12">Nucleus</location>
    </subcellularLocation>
    <text>Localized in cytoplasmic mRNP granules containing untranslated mRNAs.</text>
</comment>
<comment type="PTM">
    <text evidence="14">Ubiquitinated at Lys-45 by CRBN with polyubiquitin chains by the CUL4-RING E3 ligase (CRL4-CRBN) and then degraded by the proteasome.</text>
</comment>
<comment type="sequence caution" evidence="16">
    <conflict type="frameshift">
        <sequence resource="EMBL-CDS" id="AAA20993"/>
    </conflict>
</comment>
<comment type="sequence caution" evidence="16">
    <conflict type="miscellaneous discrepancy">
        <sequence resource="EMBL-CDS" id="AAF29591"/>
    </conflict>
    <text>Chimeric cDNA.</text>
</comment>
<evidence type="ECO:0000250" key="1">
    <source>
        <dbReference type="UniProtKB" id="Q9CXY6"/>
    </source>
</evidence>
<evidence type="ECO:0000255" key="2">
    <source>
        <dbReference type="PROSITE-ProRule" id="PRU01040"/>
    </source>
</evidence>
<evidence type="ECO:0000256" key="3">
    <source>
        <dbReference type="SAM" id="MobiDB-lite"/>
    </source>
</evidence>
<evidence type="ECO:0000269" key="4">
    <source>
    </source>
</evidence>
<evidence type="ECO:0000269" key="5">
    <source>
    </source>
</evidence>
<evidence type="ECO:0000269" key="6">
    <source>
    </source>
</evidence>
<evidence type="ECO:0000269" key="7">
    <source>
    </source>
</evidence>
<evidence type="ECO:0000269" key="8">
    <source>
    </source>
</evidence>
<evidence type="ECO:0000269" key="9">
    <source>
    </source>
</evidence>
<evidence type="ECO:0000269" key="10">
    <source>
    </source>
</evidence>
<evidence type="ECO:0000269" key="11">
    <source>
    </source>
</evidence>
<evidence type="ECO:0000269" key="12">
    <source>
    </source>
</evidence>
<evidence type="ECO:0000269" key="13">
    <source>
    </source>
</evidence>
<evidence type="ECO:0000269" key="14">
    <source>
    </source>
</evidence>
<evidence type="ECO:0000269" key="15">
    <source>
    </source>
</evidence>
<evidence type="ECO:0000305" key="16"/>
<evidence type="ECO:0007744" key="17">
    <source>
    </source>
</evidence>
<evidence type="ECO:0007744" key="18">
    <source>
    </source>
</evidence>
<evidence type="ECO:0007744" key="19">
    <source>
    </source>
</evidence>
<evidence type="ECO:0007744" key="20">
    <source>
    </source>
</evidence>
<feature type="chain" id="PRO_0000126063" description="Interleukin enhancer-binding factor 2">
    <location>
        <begin position="1"/>
        <end position="390"/>
    </location>
</feature>
<feature type="domain" description="DZF" evidence="2">
    <location>
        <begin position="24"/>
        <end position="371"/>
    </location>
</feature>
<feature type="region of interest" description="Disordered" evidence="3">
    <location>
        <begin position="1"/>
        <end position="20"/>
    </location>
</feature>
<feature type="region of interest" description="Disordered" evidence="3">
    <location>
        <begin position="351"/>
        <end position="390"/>
    </location>
</feature>
<feature type="compositionally biased region" description="Gly residues" evidence="3">
    <location>
        <begin position="11"/>
        <end position="20"/>
    </location>
</feature>
<feature type="compositionally biased region" description="Basic and acidic residues" evidence="3">
    <location>
        <begin position="356"/>
        <end position="367"/>
    </location>
</feature>
<feature type="compositionally biased region" description="Acidic residues" evidence="3">
    <location>
        <begin position="368"/>
        <end position="390"/>
    </location>
</feature>
<feature type="modified residue" description="Asymmetric dimethylarginine; alternate" evidence="1">
    <location>
        <position position="16"/>
    </location>
</feature>
<feature type="modified residue" description="Omega-N-methylarginine; alternate" evidence="19">
    <location>
        <position position="16"/>
    </location>
</feature>
<feature type="modified residue" description="Omega-N-methylarginine" evidence="19">
    <location>
        <position position="24"/>
    </location>
</feature>
<feature type="modified residue" description="Phosphoserine" evidence="18">
    <location>
        <position position="52"/>
    </location>
</feature>
<feature type="modified residue" description="Phosphoserine" evidence="18">
    <location>
        <position position="68"/>
    </location>
</feature>
<feature type="modified residue" description="Phosphothreonine" evidence="17">
    <location>
        <position position="388"/>
    </location>
</feature>
<feature type="cross-link" description="Glycyl lysine isopeptide (Lys-Gly) (interchain with G-Cter in ubiquitin)" evidence="14">
    <location>
        <position position="45"/>
    </location>
</feature>
<feature type="cross-link" description="Glycyl lysine isopeptide (Lys-Gly) (interchain with G-Cter in SUMO2)" evidence="20">
    <location>
        <position position="186"/>
    </location>
</feature>
<feature type="cross-link" description="Glycyl lysine isopeptide (Lys-Gly) (interchain with G-Cter in SUMO2)" evidence="20">
    <location>
        <position position="364"/>
    </location>
</feature>
<feature type="mutagenesis site" description="Completely abolishes the effect of CRBN on ILF2." evidence="14">
    <original>K</original>
    <variation>R</variation>
    <location>
        <position position="45"/>
    </location>
</feature>
<protein>
    <recommendedName>
        <fullName>Interleukin enhancer-binding factor 2</fullName>
    </recommendedName>
    <alternativeName>
        <fullName>Nuclear factor of activated T-cells 45 kDa</fullName>
    </alternativeName>
</protein>
<accession>Q12905</accession>
<accession>A6NDB0</accession>
<accession>B2R8G7</accession>
<accession>Q5SR10</accession>
<accession>Q5SR11</accession>
<accession>Q7L7R3</accession>
<accession>Q9BWD4</accession>
<accession>Q9P1N0</accession>
<sequence>MRGDRGRGRGGRFGSRGGPGGGFRPFVPHIPFDFYLCEMAFPRVKPAPDETSFSEALLKRNQDLAPNSAEQASILSLVTKINNVIDNLIVAPGTFEVQIEEVRQVGSYKKGTMTTGHNVADLVVILKILPTLEAVAALGNKVVESLRAQDPSEVLTMLTNETGFEISSSDATVKILITTVPPNLRKLDPELHLDIKVLQSALAAIRHARWFEENASQSTVKVLIRLLKDLRIRFPGFEPLTPWILDLLGHYAVMNNPTRQPLALNVAYRRCLQILAAGLFLPGSVGITDPCESGNFRVHTVMTLEQQDMVCYTAQTLVRILSHGGFRKILGQEGDASYLASEISTWDGVIVTPSEKAYEKPPEKKEGEEEEENTEEPPQGEEEESMETQE</sequence>
<organism>
    <name type="scientific">Homo sapiens</name>
    <name type="common">Human</name>
    <dbReference type="NCBI Taxonomy" id="9606"/>
    <lineage>
        <taxon>Eukaryota</taxon>
        <taxon>Metazoa</taxon>
        <taxon>Chordata</taxon>
        <taxon>Craniata</taxon>
        <taxon>Vertebrata</taxon>
        <taxon>Euteleostomi</taxon>
        <taxon>Mammalia</taxon>
        <taxon>Eutheria</taxon>
        <taxon>Euarchontoglires</taxon>
        <taxon>Primates</taxon>
        <taxon>Haplorrhini</taxon>
        <taxon>Catarrhini</taxon>
        <taxon>Hominidae</taxon>
        <taxon>Homo</taxon>
    </lineage>
</organism>
<dbReference type="EMBL" id="U10323">
    <property type="protein sequence ID" value="AAA20993.1"/>
    <property type="status" value="ALT_FRAME"/>
    <property type="molecule type" value="mRNA"/>
</dbReference>
<dbReference type="EMBL" id="AY099265">
    <property type="protein sequence ID" value="AAM45141.1"/>
    <property type="molecule type" value="Genomic_DNA"/>
</dbReference>
<dbReference type="EMBL" id="AK313364">
    <property type="protein sequence ID" value="BAG36164.1"/>
    <property type="molecule type" value="mRNA"/>
</dbReference>
<dbReference type="EMBL" id="AL592150">
    <property type="protein sequence ID" value="CAI18796.1"/>
    <property type="molecule type" value="Genomic_DNA"/>
</dbReference>
<dbReference type="EMBL" id="AL713889">
    <property type="status" value="NOT_ANNOTATED_CDS"/>
    <property type="molecule type" value="Genomic_DNA"/>
</dbReference>
<dbReference type="EMBL" id="CH471121">
    <property type="protein sequence ID" value="EAW53286.1"/>
    <property type="molecule type" value="Genomic_DNA"/>
</dbReference>
<dbReference type="EMBL" id="BC000382">
    <property type="protein sequence ID" value="AAH00382.1"/>
    <property type="molecule type" value="mRNA"/>
</dbReference>
<dbReference type="EMBL" id="AF113702">
    <property type="protein sequence ID" value="AAF29591.1"/>
    <property type="status" value="ALT_SEQ"/>
    <property type="molecule type" value="mRNA"/>
</dbReference>
<dbReference type="CCDS" id="CCDS1050.1"/>
<dbReference type="PIR" id="A54857">
    <property type="entry name" value="A54857"/>
</dbReference>
<dbReference type="RefSeq" id="NP_001254738.1">
    <property type="nucleotide sequence ID" value="NM_001267809.1"/>
</dbReference>
<dbReference type="RefSeq" id="NP_004506.2">
    <property type="nucleotide sequence ID" value="NM_004515.3"/>
</dbReference>
<dbReference type="SMR" id="Q12905"/>
<dbReference type="BioGRID" id="109821">
    <property type="interactions" value="611"/>
</dbReference>
<dbReference type="CORUM" id="Q12905"/>
<dbReference type="FunCoup" id="Q12905">
    <property type="interactions" value="2552"/>
</dbReference>
<dbReference type="IntAct" id="Q12905">
    <property type="interactions" value="245"/>
</dbReference>
<dbReference type="MINT" id="Q12905"/>
<dbReference type="STRING" id="9606.ENSP00000355011"/>
<dbReference type="ChEMBL" id="CHEMBL4295811"/>
<dbReference type="GlyGen" id="Q12905">
    <property type="glycosylation" value="2 sites, 1 N-linked glycan (1 site), 1 O-linked glycan (1 site)"/>
</dbReference>
<dbReference type="iPTMnet" id="Q12905"/>
<dbReference type="PhosphoSitePlus" id="Q12905"/>
<dbReference type="SwissPalm" id="Q12905"/>
<dbReference type="BioMuta" id="ILF2"/>
<dbReference type="DMDM" id="62510764"/>
<dbReference type="CPTAC" id="CPTAC-223"/>
<dbReference type="CPTAC" id="CPTAC-224"/>
<dbReference type="jPOST" id="Q12905"/>
<dbReference type="MassIVE" id="Q12905"/>
<dbReference type="PaxDb" id="9606-ENSP00000355011"/>
<dbReference type="PeptideAtlas" id="Q12905"/>
<dbReference type="ProteomicsDB" id="59013"/>
<dbReference type="Pumba" id="Q12905"/>
<dbReference type="Antibodypedia" id="1451">
    <property type="antibodies" value="425 antibodies from 38 providers"/>
</dbReference>
<dbReference type="DNASU" id="3608"/>
<dbReference type="Ensembl" id="ENST00000361891.9">
    <property type="protein sequence ID" value="ENSP00000355011.4"/>
    <property type="gene ID" value="ENSG00000143621.17"/>
</dbReference>
<dbReference type="GeneID" id="3608"/>
<dbReference type="KEGG" id="hsa:3608"/>
<dbReference type="MANE-Select" id="ENST00000361891.9">
    <property type="protein sequence ID" value="ENSP00000355011.4"/>
    <property type="RefSeq nucleotide sequence ID" value="NM_004515.4"/>
    <property type="RefSeq protein sequence ID" value="NP_004506.2"/>
</dbReference>
<dbReference type="UCSC" id="uc001fcr.5">
    <property type="organism name" value="human"/>
</dbReference>
<dbReference type="AGR" id="HGNC:6037"/>
<dbReference type="CTD" id="3608"/>
<dbReference type="DisGeNET" id="3608"/>
<dbReference type="GeneCards" id="ILF2"/>
<dbReference type="HGNC" id="HGNC:6037">
    <property type="gene designation" value="ILF2"/>
</dbReference>
<dbReference type="HPA" id="ENSG00000143621">
    <property type="expression patterns" value="Low tissue specificity"/>
</dbReference>
<dbReference type="MIM" id="603181">
    <property type="type" value="gene"/>
</dbReference>
<dbReference type="neXtProt" id="NX_Q12905"/>
<dbReference type="OpenTargets" id="ENSG00000143621"/>
<dbReference type="PharmGKB" id="PA29852"/>
<dbReference type="VEuPathDB" id="HostDB:ENSG00000143621"/>
<dbReference type="eggNOG" id="KOG3793">
    <property type="taxonomic scope" value="Eukaryota"/>
</dbReference>
<dbReference type="GeneTree" id="ENSGT00940000154879"/>
<dbReference type="InParanoid" id="Q12905"/>
<dbReference type="OMA" id="YLAIEMS"/>
<dbReference type="OrthoDB" id="5775647at2759"/>
<dbReference type="PAN-GO" id="Q12905">
    <property type="GO annotations" value="3 GO annotations based on evolutionary models"/>
</dbReference>
<dbReference type="PhylomeDB" id="Q12905"/>
<dbReference type="TreeFam" id="TF320194"/>
<dbReference type="PathwayCommons" id="Q12905"/>
<dbReference type="Reactome" id="R-HSA-6798695">
    <property type="pathway name" value="Neutrophil degranulation"/>
</dbReference>
<dbReference type="Reactome" id="R-HSA-9833482">
    <property type="pathway name" value="PKR-mediated signaling"/>
</dbReference>
<dbReference type="SignaLink" id="Q12905"/>
<dbReference type="SIGNOR" id="Q12905"/>
<dbReference type="BioGRID-ORCS" id="3608">
    <property type="hits" value="658 hits in 1162 CRISPR screens"/>
</dbReference>
<dbReference type="CD-CODE" id="232F8A39">
    <property type="entry name" value="P-body"/>
</dbReference>
<dbReference type="CD-CODE" id="804901D1">
    <property type="entry name" value="Nuclear speckle"/>
</dbReference>
<dbReference type="CD-CODE" id="91857CE7">
    <property type="entry name" value="Nucleolus"/>
</dbReference>
<dbReference type="CD-CODE" id="DEE660B4">
    <property type="entry name" value="Stress granule"/>
</dbReference>
<dbReference type="ChiTaRS" id="ILF2">
    <property type="organism name" value="human"/>
</dbReference>
<dbReference type="GeneWiki" id="ILF2"/>
<dbReference type="GenomeRNAi" id="3608"/>
<dbReference type="Pharos" id="Q12905">
    <property type="development level" value="Tbio"/>
</dbReference>
<dbReference type="PRO" id="PR:Q12905"/>
<dbReference type="Proteomes" id="UP000005640">
    <property type="component" value="Chromosome 1"/>
</dbReference>
<dbReference type="RNAct" id="Q12905">
    <property type="molecule type" value="protein"/>
</dbReference>
<dbReference type="Bgee" id="ENSG00000143621">
    <property type="expression patterns" value="Expressed in ganglionic eminence and 208 other cell types or tissues"/>
</dbReference>
<dbReference type="ExpressionAtlas" id="Q12905">
    <property type="expression patterns" value="baseline and differential"/>
</dbReference>
<dbReference type="GO" id="GO:0005829">
    <property type="term" value="C:cytosol"/>
    <property type="evidence" value="ECO:0000314"/>
    <property type="project" value="HPA"/>
</dbReference>
<dbReference type="GO" id="GO:0005576">
    <property type="term" value="C:extracellular region"/>
    <property type="evidence" value="ECO:0007005"/>
    <property type="project" value="BHF-UCL"/>
</dbReference>
<dbReference type="GO" id="GO:1904813">
    <property type="term" value="C:ficolin-1-rich granule lumen"/>
    <property type="evidence" value="ECO:0000304"/>
    <property type="project" value="Reactome"/>
</dbReference>
<dbReference type="GO" id="GO:0016020">
    <property type="term" value="C:membrane"/>
    <property type="evidence" value="ECO:0007005"/>
    <property type="project" value="UniProtKB"/>
</dbReference>
<dbReference type="GO" id="GO:0005730">
    <property type="term" value="C:nucleolus"/>
    <property type="evidence" value="ECO:0000314"/>
    <property type="project" value="UniProtKB"/>
</dbReference>
<dbReference type="GO" id="GO:0005654">
    <property type="term" value="C:nucleoplasm"/>
    <property type="evidence" value="ECO:0000314"/>
    <property type="project" value="HPA"/>
</dbReference>
<dbReference type="GO" id="GO:0005634">
    <property type="term" value="C:nucleus"/>
    <property type="evidence" value="ECO:0000314"/>
    <property type="project" value="UniProtKB"/>
</dbReference>
<dbReference type="GO" id="GO:1990904">
    <property type="term" value="C:ribonucleoprotein complex"/>
    <property type="evidence" value="ECO:0000314"/>
    <property type="project" value="UniProtKB"/>
</dbReference>
<dbReference type="GO" id="GO:0035580">
    <property type="term" value="C:specific granule lumen"/>
    <property type="evidence" value="ECO:0000304"/>
    <property type="project" value="Reactome"/>
</dbReference>
<dbReference type="GO" id="GO:1904724">
    <property type="term" value="C:tertiary granule lumen"/>
    <property type="evidence" value="ECO:0000304"/>
    <property type="project" value="Reactome"/>
</dbReference>
<dbReference type="GO" id="GO:0003677">
    <property type="term" value="F:DNA binding"/>
    <property type="evidence" value="ECO:0000314"/>
    <property type="project" value="UniProtKB"/>
</dbReference>
<dbReference type="GO" id="GO:0003725">
    <property type="term" value="F:double-stranded RNA binding"/>
    <property type="evidence" value="ECO:0000314"/>
    <property type="project" value="UniProtKB"/>
</dbReference>
<dbReference type="GO" id="GO:0003723">
    <property type="term" value="F:RNA binding"/>
    <property type="evidence" value="ECO:0007005"/>
    <property type="project" value="UniProtKB"/>
</dbReference>
<dbReference type="GO" id="GO:0045893">
    <property type="term" value="P:positive regulation of DNA-templated transcription"/>
    <property type="evidence" value="ECO:0000314"/>
    <property type="project" value="UniProtKB"/>
</dbReference>
<dbReference type="DisProt" id="DP01564"/>
<dbReference type="FunFam" id="1.10.1410.40:FF:000004">
    <property type="entry name" value="Interleukin enhancer-binding factor 2"/>
    <property type="match status" value="1"/>
</dbReference>
<dbReference type="FunFam" id="1.10.1410.40:FF:000010">
    <property type="entry name" value="Interleukin enhancer-binding factor 2"/>
    <property type="match status" value="1"/>
</dbReference>
<dbReference type="FunFam" id="3.30.460.10:FF:000093">
    <property type="entry name" value="Interleukin enhancer-binding factor 2"/>
    <property type="match status" value="1"/>
</dbReference>
<dbReference type="Gene3D" id="1.10.1410.40">
    <property type="match status" value="1"/>
</dbReference>
<dbReference type="Gene3D" id="3.30.460.10">
    <property type="entry name" value="Beta Polymerase, domain 2"/>
    <property type="match status" value="1"/>
</dbReference>
<dbReference type="InterPro" id="IPR006561">
    <property type="entry name" value="DZF_dom"/>
</dbReference>
<dbReference type="InterPro" id="IPR049402">
    <property type="entry name" value="DZF_dom_C"/>
</dbReference>
<dbReference type="InterPro" id="IPR049401">
    <property type="entry name" value="DZF_dom_N"/>
</dbReference>
<dbReference type="InterPro" id="IPR052134">
    <property type="entry name" value="ILF2"/>
</dbReference>
<dbReference type="InterPro" id="IPR043519">
    <property type="entry name" value="NT_sf"/>
</dbReference>
<dbReference type="PANTHER" id="PTHR46447">
    <property type="entry name" value="INTERLEUKIN ENHANCER-BINDING FACTOR"/>
    <property type="match status" value="1"/>
</dbReference>
<dbReference type="PANTHER" id="PTHR46447:SF1">
    <property type="entry name" value="INTERLEUKIN ENHANCER-BINDING FACTOR 2"/>
    <property type="match status" value="1"/>
</dbReference>
<dbReference type="Pfam" id="PF20965">
    <property type="entry name" value="DZF_C"/>
    <property type="match status" value="1"/>
</dbReference>
<dbReference type="Pfam" id="PF07528">
    <property type="entry name" value="DZF_N"/>
    <property type="match status" value="1"/>
</dbReference>
<dbReference type="SMART" id="SM00572">
    <property type="entry name" value="DZF"/>
    <property type="match status" value="1"/>
</dbReference>
<dbReference type="SUPFAM" id="SSF81301">
    <property type="entry name" value="Nucleotidyltransferase"/>
    <property type="match status" value="1"/>
</dbReference>
<dbReference type="PROSITE" id="PS51703">
    <property type="entry name" value="DZF"/>
    <property type="match status" value="1"/>
</dbReference>
<gene>
    <name type="primary">ILF2</name>
    <name type="synonym">NF45</name>
    <name type="ORF">PRO3063</name>
</gene>
<name>ILF2_HUMAN</name>
<proteinExistence type="evidence at protein level"/>
<keyword id="KW-0010">Activator</keyword>
<keyword id="KW-0963">Cytoplasm</keyword>
<keyword id="KW-0903">Direct protein sequencing</keyword>
<keyword id="KW-0238">DNA-binding</keyword>
<keyword id="KW-1017">Isopeptide bond</keyword>
<keyword id="KW-0488">Methylation</keyword>
<keyword id="KW-0539">Nucleus</keyword>
<keyword id="KW-0597">Phosphoprotein</keyword>
<keyword id="KW-1267">Proteomics identification</keyword>
<keyword id="KW-1185">Reference proteome</keyword>
<keyword id="KW-0804">Transcription</keyword>
<keyword id="KW-0805">Transcription regulation</keyword>
<keyword id="KW-0832">Ubl conjugation</keyword>
<reference key="1">
    <citation type="journal article" date="1994" name="J. Biol. Chem.">
        <title>Cloning and expression of cyclosporin A- and FK506-sensitive nuclear factor of activated T-cells: NF45 and NF90.</title>
        <authorList>
            <person name="Kao P.N."/>
            <person name="Chen L."/>
            <person name="Brock G."/>
            <person name="Ng J."/>
            <person name="Kenny J."/>
            <person name="Smith A.J."/>
            <person name="Corthesy B."/>
        </authorList>
    </citation>
    <scope>NUCLEOTIDE SEQUENCE [GENOMIC DNA / MRNA]</scope>
    <scope>PROTEIN SEQUENCE OF 62-75; 82-102 AND 330-343</scope>
    <scope>SUBCELLULAR LOCATION</scope>
</reference>
<reference key="2">
    <citation type="journal article" date="2004" name="Nat. Genet.">
        <title>Complete sequencing and characterization of 21,243 full-length human cDNAs.</title>
        <authorList>
            <person name="Ota T."/>
            <person name="Suzuki Y."/>
            <person name="Nishikawa T."/>
            <person name="Otsuki T."/>
            <person name="Sugiyama T."/>
            <person name="Irie R."/>
            <person name="Wakamatsu A."/>
            <person name="Hayashi K."/>
            <person name="Sato H."/>
            <person name="Nagai K."/>
            <person name="Kimura K."/>
            <person name="Makita H."/>
            <person name="Sekine M."/>
            <person name="Obayashi M."/>
            <person name="Nishi T."/>
            <person name="Shibahara T."/>
            <person name="Tanaka T."/>
            <person name="Ishii S."/>
            <person name="Yamamoto J."/>
            <person name="Saito K."/>
            <person name="Kawai Y."/>
            <person name="Isono Y."/>
            <person name="Nakamura Y."/>
            <person name="Nagahari K."/>
            <person name="Murakami K."/>
            <person name="Yasuda T."/>
            <person name="Iwayanagi T."/>
            <person name="Wagatsuma M."/>
            <person name="Shiratori A."/>
            <person name="Sudo H."/>
            <person name="Hosoiri T."/>
            <person name="Kaku Y."/>
            <person name="Kodaira H."/>
            <person name="Kondo H."/>
            <person name="Sugawara M."/>
            <person name="Takahashi M."/>
            <person name="Kanda K."/>
            <person name="Yokoi T."/>
            <person name="Furuya T."/>
            <person name="Kikkawa E."/>
            <person name="Omura Y."/>
            <person name="Abe K."/>
            <person name="Kamihara K."/>
            <person name="Katsuta N."/>
            <person name="Sato K."/>
            <person name="Tanikawa M."/>
            <person name="Yamazaki M."/>
            <person name="Ninomiya K."/>
            <person name="Ishibashi T."/>
            <person name="Yamashita H."/>
            <person name="Murakawa K."/>
            <person name="Fujimori K."/>
            <person name="Tanai H."/>
            <person name="Kimata M."/>
            <person name="Watanabe M."/>
            <person name="Hiraoka S."/>
            <person name="Chiba Y."/>
            <person name="Ishida S."/>
            <person name="Ono Y."/>
            <person name="Takiguchi S."/>
            <person name="Watanabe S."/>
            <person name="Yosida M."/>
            <person name="Hotuta T."/>
            <person name="Kusano J."/>
            <person name="Kanehori K."/>
            <person name="Takahashi-Fujii A."/>
            <person name="Hara H."/>
            <person name="Tanase T.-O."/>
            <person name="Nomura Y."/>
            <person name="Togiya S."/>
            <person name="Komai F."/>
            <person name="Hara R."/>
            <person name="Takeuchi K."/>
            <person name="Arita M."/>
            <person name="Imose N."/>
            <person name="Musashino K."/>
            <person name="Yuuki H."/>
            <person name="Oshima A."/>
            <person name="Sasaki N."/>
            <person name="Aotsuka S."/>
            <person name="Yoshikawa Y."/>
            <person name="Matsunawa H."/>
            <person name="Ichihara T."/>
            <person name="Shiohata N."/>
            <person name="Sano S."/>
            <person name="Moriya S."/>
            <person name="Momiyama H."/>
            <person name="Satoh N."/>
            <person name="Takami S."/>
            <person name="Terashima Y."/>
            <person name="Suzuki O."/>
            <person name="Nakagawa S."/>
            <person name="Senoh A."/>
            <person name="Mizoguchi H."/>
            <person name="Goto Y."/>
            <person name="Shimizu F."/>
            <person name="Wakebe H."/>
            <person name="Hishigaki H."/>
            <person name="Watanabe T."/>
            <person name="Sugiyama A."/>
            <person name="Takemoto M."/>
            <person name="Kawakami B."/>
            <person name="Yamazaki M."/>
            <person name="Watanabe K."/>
            <person name="Kumagai A."/>
            <person name="Itakura S."/>
            <person name="Fukuzumi Y."/>
            <person name="Fujimori Y."/>
            <person name="Komiyama M."/>
            <person name="Tashiro H."/>
            <person name="Tanigami A."/>
            <person name="Fujiwara T."/>
            <person name="Ono T."/>
            <person name="Yamada K."/>
            <person name="Fujii Y."/>
            <person name="Ozaki K."/>
            <person name="Hirao M."/>
            <person name="Ohmori Y."/>
            <person name="Kawabata A."/>
            <person name="Hikiji T."/>
            <person name="Kobatake N."/>
            <person name="Inagaki H."/>
            <person name="Ikema Y."/>
            <person name="Okamoto S."/>
            <person name="Okitani R."/>
            <person name="Kawakami T."/>
            <person name="Noguchi S."/>
            <person name="Itoh T."/>
            <person name="Shigeta K."/>
            <person name="Senba T."/>
            <person name="Matsumura K."/>
            <person name="Nakajima Y."/>
            <person name="Mizuno T."/>
            <person name="Morinaga M."/>
            <person name="Sasaki M."/>
            <person name="Togashi T."/>
            <person name="Oyama M."/>
            <person name="Hata H."/>
            <person name="Watanabe M."/>
            <person name="Komatsu T."/>
            <person name="Mizushima-Sugano J."/>
            <person name="Satoh T."/>
            <person name="Shirai Y."/>
            <person name="Takahashi Y."/>
            <person name="Nakagawa K."/>
            <person name="Okumura K."/>
            <person name="Nagase T."/>
            <person name="Nomura N."/>
            <person name="Kikuchi H."/>
            <person name="Masuho Y."/>
            <person name="Yamashita R."/>
            <person name="Nakai K."/>
            <person name="Yada T."/>
            <person name="Nakamura Y."/>
            <person name="Ohara O."/>
            <person name="Isogai T."/>
            <person name="Sugano S."/>
        </authorList>
    </citation>
    <scope>NUCLEOTIDE SEQUENCE [LARGE SCALE MRNA]</scope>
    <source>
        <tissue>Thymus</tissue>
    </source>
</reference>
<reference key="3">
    <citation type="journal article" date="2006" name="Nature">
        <title>The DNA sequence and biological annotation of human chromosome 1.</title>
        <authorList>
            <person name="Gregory S.G."/>
            <person name="Barlow K.F."/>
            <person name="McLay K.E."/>
            <person name="Kaul R."/>
            <person name="Swarbreck D."/>
            <person name="Dunham A."/>
            <person name="Scott C.E."/>
            <person name="Howe K.L."/>
            <person name="Woodfine K."/>
            <person name="Spencer C.C.A."/>
            <person name="Jones M.C."/>
            <person name="Gillson C."/>
            <person name="Searle S."/>
            <person name="Zhou Y."/>
            <person name="Kokocinski F."/>
            <person name="McDonald L."/>
            <person name="Evans R."/>
            <person name="Phillips K."/>
            <person name="Atkinson A."/>
            <person name="Cooper R."/>
            <person name="Jones C."/>
            <person name="Hall R.E."/>
            <person name="Andrews T.D."/>
            <person name="Lloyd C."/>
            <person name="Ainscough R."/>
            <person name="Almeida J.P."/>
            <person name="Ambrose K.D."/>
            <person name="Anderson F."/>
            <person name="Andrew R.W."/>
            <person name="Ashwell R.I.S."/>
            <person name="Aubin K."/>
            <person name="Babbage A.K."/>
            <person name="Bagguley C.L."/>
            <person name="Bailey J."/>
            <person name="Beasley H."/>
            <person name="Bethel G."/>
            <person name="Bird C.P."/>
            <person name="Bray-Allen S."/>
            <person name="Brown J.Y."/>
            <person name="Brown A.J."/>
            <person name="Buckley D."/>
            <person name="Burton J."/>
            <person name="Bye J."/>
            <person name="Carder C."/>
            <person name="Chapman J.C."/>
            <person name="Clark S.Y."/>
            <person name="Clarke G."/>
            <person name="Clee C."/>
            <person name="Cobley V."/>
            <person name="Collier R.E."/>
            <person name="Corby N."/>
            <person name="Coville G.J."/>
            <person name="Davies J."/>
            <person name="Deadman R."/>
            <person name="Dunn M."/>
            <person name="Earthrowl M."/>
            <person name="Ellington A.G."/>
            <person name="Errington H."/>
            <person name="Frankish A."/>
            <person name="Frankland J."/>
            <person name="French L."/>
            <person name="Garner P."/>
            <person name="Garnett J."/>
            <person name="Gay L."/>
            <person name="Ghori M.R.J."/>
            <person name="Gibson R."/>
            <person name="Gilby L.M."/>
            <person name="Gillett W."/>
            <person name="Glithero R.J."/>
            <person name="Grafham D.V."/>
            <person name="Griffiths C."/>
            <person name="Griffiths-Jones S."/>
            <person name="Grocock R."/>
            <person name="Hammond S."/>
            <person name="Harrison E.S.I."/>
            <person name="Hart E."/>
            <person name="Haugen E."/>
            <person name="Heath P.D."/>
            <person name="Holmes S."/>
            <person name="Holt K."/>
            <person name="Howden P.J."/>
            <person name="Hunt A.R."/>
            <person name="Hunt S.E."/>
            <person name="Hunter G."/>
            <person name="Isherwood J."/>
            <person name="James R."/>
            <person name="Johnson C."/>
            <person name="Johnson D."/>
            <person name="Joy A."/>
            <person name="Kay M."/>
            <person name="Kershaw J.K."/>
            <person name="Kibukawa M."/>
            <person name="Kimberley A.M."/>
            <person name="King A."/>
            <person name="Knights A.J."/>
            <person name="Lad H."/>
            <person name="Laird G."/>
            <person name="Lawlor S."/>
            <person name="Leongamornlert D.A."/>
            <person name="Lloyd D.M."/>
            <person name="Loveland J."/>
            <person name="Lovell J."/>
            <person name="Lush M.J."/>
            <person name="Lyne R."/>
            <person name="Martin S."/>
            <person name="Mashreghi-Mohammadi M."/>
            <person name="Matthews L."/>
            <person name="Matthews N.S.W."/>
            <person name="McLaren S."/>
            <person name="Milne S."/>
            <person name="Mistry S."/>
            <person name="Moore M.J.F."/>
            <person name="Nickerson T."/>
            <person name="O'Dell C.N."/>
            <person name="Oliver K."/>
            <person name="Palmeiri A."/>
            <person name="Palmer S.A."/>
            <person name="Parker A."/>
            <person name="Patel D."/>
            <person name="Pearce A.V."/>
            <person name="Peck A.I."/>
            <person name="Pelan S."/>
            <person name="Phelps K."/>
            <person name="Phillimore B.J."/>
            <person name="Plumb R."/>
            <person name="Rajan J."/>
            <person name="Raymond C."/>
            <person name="Rouse G."/>
            <person name="Saenphimmachak C."/>
            <person name="Sehra H.K."/>
            <person name="Sheridan E."/>
            <person name="Shownkeen R."/>
            <person name="Sims S."/>
            <person name="Skuce C.D."/>
            <person name="Smith M."/>
            <person name="Steward C."/>
            <person name="Subramanian S."/>
            <person name="Sycamore N."/>
            <person name="Tracey A."/>
            <person name="Tromans A."/>
            <person name="Van Helmond Z."/>
            <person name="Wall M."/>
            <person name="Wallis J.M."/>
            <person name="White S."/>
            <person name="Whitehead S.L."/>
            <person name="Wilkinson J.E."/>
            <person name="Willey D.L."/>
            <person name="Williams H."/>
            <person name="Wilming L."/>
            <person name="Wray P.W."/>
            <person name="Wu Z."/>
            <person name="Coulson A."/>
            <person name="Vaudin M."/>
            <person name="Sulston J.E."/>
            <person name="Durbin R.M."/>
            <person name="Hubbard T."/>
            <person name="Wooster R."/>
            <person name="Dunham I."/>
            <person name="Carter N.P."/>
            <person name="McVean G."/>
            <person name="Ross M.T."/>
            <person name="Harrow J."/>
            <person name="Olson M.V."/>
            <person name="Beck S."/>
            <person name="Rogers J."/>
            <person name="Bentley D.R."/>
        </authorList>
    </citation>
    <scope>NUCLEOTIDE SEQUENCE [LARGE SCALE GENOMIC DNA]</scope>
</reference>
<reference key="4">
    <citation type="submission" date="2005-09" db="EMBL/GenBank/DDBJ databases">
        <authorList>
            <person name="Mural R.J."/>
            <person name="Istrail S."/>
            <person name="Sutton G.G."/>
            <person name="Florea L."/>
            <person name="Halpern A.L."/>
            <person name="Mobarry C.M."/>
            <person name="Lippert R."/>
            <person name="Walenz B."/>
            <person name="Shatkay H."/>
            <person name="Dew I."/>
            <person name="Miller J.R."/>
            <person name="Flanigan M.J."/>
            <person name="Edwards N.J."/>
            <person name="Bolanos R."/>
            <person name="Fasulo D."/>
            <person name="Halldorsson B.V."/>
            <person name="Hannenhalli S."/>
            <person name="Turner R."/>
            <person name="Yooseph S."/>
            <person name="Lu F."/>
            <person name="Nusskern D.R."/>
            <person name="Shue B.C."/>
            <person name="Zheng X.H."/>
            <person name="Zhong F."/>
            <person name="Delcher A.L."/>
            <person name="Huson D.H."/>
            <person name="Kravitz S.A."/>
            <person name="Mouchard L."/>
            <person name="Reinert K."/>
            <person name="Remington K.A."/>
            <person name="Clark A.G."/>
            <person name="Waterman M.S."/>
            <person name="Eichler E.E."/>
            <person name="Adams M.D."/>
            <person name="Hunkapiller M.W."/>
            <person name="Myers E.W."/>
            <person name="Venter J.C."/>
        </authorList>
    </citation>
    <scope>NUCLEOTIDE SEQUENCE [LARGE SCALE GENOMIC DNA]</scope>
</reference>
<reference key="5">
    <citation type="journal article" date="2004" name="Genome Res.">
        <title>The status, quality, and expansion of the NIH full-length cDNA project: the Mammalian Gene Collection (MGC).</title>
        <authorList>
            <consortium name="The MGC Project Team"/>
        </authorList>
    </citation>
    <scope>NUCLEOTIDE SEQUENCE [LARGE SCALE MRNA]</scope>
    <source>
        <tissue>Lung</tissue>
    </source>
</reference>
<reference key="6">
    <citation type="submission" date="1998-12" db="EMBL/GenBank/DDBJ databases">
        <title>Functional prediction of the coding sequences of 32 new genes deduced by analysis of cDNA clones from human fetal liver.</title>
        <authorList>
            <person name="Zhang C."/>
            <person name="Yu Y."/>
            <person name="Zhang S."/>
            <person name="Ouyang S."/>
            <person name="Luo L."/>
            <person name="Wei H."/>
            <person name="Zhou G."/>
            <person name="Zhou W."/>
            <person name="Bi J."/>
            <person name="Zhang Y."/>
            <person name="Liu M."/>
            <person name="He F."/>
        </authorList>
    </citation>
    <scope>NUCLEOTIDE SEQUENCE [LARGE SCALE MRNA] OF 157-390</scope>
    <source>
        <tissue>Fetal liver</tissue>
    </source>
</reference>
<reference key="7">
    <citation type="journal article" date="1998" name="J. Biol. Chem.">
        <title>DNA-dependent protein kinase interacts with antigen receptor response element binding proteins NF90 and NF45.</title>
        <authorList>
            <person name="Ting N.S.Y."/>
            <person name="Kao P.N."/>
            <person name="Chan D.W."/>
            <person name="Lintott L.G."/>
            <person name="Lees-Miller S.P."/>
        </authorList>
    </citation>
    <scope>FUNCTION</scope>
    <scope>IDENTIFICATION BY MASS SPECTROMETRY</scope>
    <scope>INTERACTION WITH G22P1; PRKDC AND XRCC5</scope>
</reference>
<reference key="8">
    <citation type="journal article" date="1999" name="J. Biol. Chem.">
        <title>Autoantibodies define a family of proteins with conserved double-stranded RNA-binding domains as well as DNA binding activity.</title>
        <authorList>
            <person name="Satoh M."/>
            <person name="Shaheen V.M."/>
            <person name="Kao P.N."/>
            <person name="Okano T."/>
            <person name="Shaw M."/>
            <person name="Yoshida H."/>
            <person name="Richards H.B."/>
            <person name="Reeves W.H."/>
        </authorList>
    </citation>
    <scope>FUNCTION</scope>
    <scope>INTERACTION WITH ILF3</scope>
</reference>
<reference key="9">
    <citation type="journal article" date="2002" name="Curr. Biol.">
        <title>Directed proteomic analysis of the human nucleolus.</title>
        <authorList>
            <person name="Andersen J.S."/>
            <person name="Lyon C.E."/>
            <person name="Fox A.H."/>
            <person name="Leung A.K.L."/>
            <person name="Lam Y.W."/>
            <person name="Steen H."/>
            <person name="Mann M."/>
            <person name="Lamond A.I."/>
        </authorList>
    </citation>
    <scope>IDENTIFICATION BY MASS SPECTROMETRY</scope>
    <scope>SUBCELLULAR LOCATION</scope>
</reference>
<reference key="10">
    <citation type="journal article" date="2002" name="Mol. Biol. Cell">
        <title>Functional proteomic analysis of human nucleolus.</title>
        <authorList>
            <person name="Scherl A."/>
            <person name="Coute Y."/>
            <person name="Deon C."/>
            <person name="Calle A."/>
            <person name="Kindbeiter K."/>
            <person name="Sanchez J.-C."/>
            <person name="Greco A."/>
            <person name="Hochstrasser D.F."/>
            <person name="Diaz J.-J."/>
        </authorList>
    </citation>
    <scope>SUBCELLULAR LOCATION [LARGE SCALE ANALYSIS]</scope>
    <source>
        <tissue>Cervix carcinoma</tissue>
    </source>
</reference>
<reference key="11">
    <citation type="journal article" date="2002" name="Mol. Cell. Biol.">
        <title>The RNA binding protein nuclear factor 90 functions as both a positive and negative regulator of gene expression in mammalian cells.</title>
        <authorList>
            <person name="Reichman T.W."/>
            <person name="Muniz L.C."/>
            <person name="Mathews M.B."/>
        </authorList>
    </citation>
    <scope>FUNCTION</scope>
    <scope>INTERACTION WITH ILF3</scope>
</reference>
<reference key="12">
    <citation type="journal article" date="2007" name="Biochim. Biophys. Acta">
        <title>The nuclear PP1 interacting protein ZAP3 (ZAP) is a putative nucleoside kinase that complexes with SAM68, CIA, NF110/45, and HNRNP-G.</title>
        <authorList>
            <person name="Ulke-Lemee A."/>
            <person name="Trinkle-Mulcahy L."/>
            <person name="Chaulk S."/>
            <person name="Bernstein N.K."/>
            <person name="Morrice N."/>
            <person name="Glover M."/>
            <person name="Lamond A.I."/>
            <person name="Moorhead G.B.G."/>
        </authorList>
    </citation>
    <scope>IDENTIFICATION IN A COMPLEX WITH ILF3; YLPM1; KHDRBS1; RBMX; NCOA5 AND PPP1CA</scope>
</reference>
<reference key="13">
    <citation type="journal article" date="2007" name="Mol. Cell. Proteomics">
        <title>Molecular composition of IMP1 ribonucleoprotein granules.</title>
        <authorList>
            <person name="Joeson L."/>
            <person name="Vikesaa J."/>
            <person name="Krogh A."/>
            <person name="Nielsen L.K."/>
            <person name="Hansen T."/>
            <person name="Borup R."/>
            <person name="Johnsen A.H."/>
            <person name="Christiansen J."/>
            <person name="Nielsen F.C."/>
        </authorList>
    </citation>
    <scope>IDENTIFICATION IN A MRNP GRANULE COMPLEX</scope>
    <scope>INTERACTION WITH IGF2BP1</scope>
    <scope>SUBCELLULAR LOCATION</scope>
</reference>
<reference key="14">
    <citation type="journal article" date="2007" name="Science">
        <title>ATM and ATR substrate analysis reveals extensive protein networks responsive to DNA damage.</title>
        <authorList>
            <person name="Matsuoka S."/>
            <person name="Ballif B.A."/>
            <person name="Smogorzewska A."/>
            <person name="McDonald E.R. III"/>
            <person name="Hurov K.E."/>
            <person name="Luo J."/>
            <person name="Bakalarski C.E."/>
            <person name="Zhao Z."/>
            <person name="Solimini N."/>
            <person name="Lerenthal Y."/>
            <person name="Shiloh Y."/>
            <person name="Gygi S.P."/>
            <person name="Elledge S.J."/>
        </authorList>
    </citation>
    <scope>PHOSPHORYLATION [LARGE SCALE ANALYSIS] AT THR-388</scope>
    <scope>IDENTIFICATION BY MASS SPECTROMETRY [LARGE SCALE ANALYSIS]</scope>
    <source>
        <tissue>Embryonic kidney</tissue>
    </source>
</reference>
<reference key="15">
    <citation type="journal article" date="2008" name="Mol. Cell. Biol.">
        <title>Nuclear factor 45 (NF45) is a regulatory subunit of complexes with NF90/110 involved in mitotic control.</title>
        <authorList>
            <person name="Guan D."/>
            <person name="Altan-Bonnet N."/>
            <person name="Parrott A.M."/>
            <person name="Arrigo C.J."/>
            <person name="Li Q."/>
            <person name="Khaleduzzaman M."/>
            <person name="Li H."/>
            <person name="Lee C.G."/>
            <person name="Pe'ery T."/>
            <person name="Mathews M.B."/>
        </authorList>
    </citation>
    <scope>FUNCTION</scope>
    <scope>INTERACTION WITH ILF3</scope>
</reference>
<reference key="16">
    <citation type="journal article" date="2010" name="Genes Dev.">
        <title>Phosphorylation of the NFAR proteins by the dsRNA-dependent protein kinase PKR constitutes a novel mechanism of translational regulation and cellular defense.</title>
        <authorList>
            <person name="Harashima A."/>
            <person name="Guettouche T."/>
            <person name="Barber G.N."/>
        </authorList>
    </citation>
    <scope>FUNCTION</scope>
    <scope>SUBCELLULAR LOCATION</scope>
</reference>
<reference key="17">
    <citation type="journal article" date="2011" name="BMC Syst. Biol.">
        <title>Initial characterization of the human central proteome.</title>
        <authorList>
            <person name="Burkard T.R."/>
            <person name="Planyavsky M."/>
            <person name="Kaupe I."/>
            <person name="Breitwieser F.P."/>
            <person name="Buerckstuemmer T."/>
            <person name="Bennett K.L."/>
            <person name="Superti-Furga G."/>
            <person name="Colinge J."/>
        </authorList>
    </citation>
    <scope>IDENTIFICATION BY MASS SPECTROMETRY [LARGE SCALE ANALYSIS]</scope>
</reference>
<reference key="18">
    <citation type="journal article" date="2013" name="J. Proteome Res.">
        <title>Toward a comprehensive characterization of a human cancer cell phosphoproteome.</title>
        <authorList>
            <person name="Zhou H."/>
            <person name="Di Palma S."/>
            <person name="Preisinger C."/>
            <person name="Peng M."/>
            <person name="Polat A.N."/>
            <person name="Heck A.J."/>
            <person name="Mohammed S."/>
        </authorList>
    </citation>
    <scope>PHOSPHORYLATION [LARGE SCALE ANALYSIS] AT SER-52 AND SER-68</scope>
    <scope>IDENTIFICATION BY MASS SPECTROMETRY [LARGE SCALE ANALYSIS]</scope>
    <source>
        <tissue>Cervix carcinoma</tissue>
        <tissue>Erythroleukemia</tissue>
    </source>
</reference>
<reference key="19">
    <citation type="journal article" date="2014" name="J. Proteomics">
        <title>An enzyme assisted RP-RPLC approach for in-depth analysis of human liver phosphoproteome.</title>
        <authorList>
            <person name="Bian Y."/>
            <person name="Song C."/>
            <person name="Cheng K."/>
            <person name="Dong M."/>
            <person name="Wang F."/>
            <person name="Huang J."/>
            <person name="Sun D."/>
            <person name="Wang L."/>
            <person name="Ye M."/>
            <person name="Zou H."/>
        </authorList>
    </citation>
    <scope>IDENTIFICATION BY MASS SPECTROMETRY [LARGE SCALE ANALYSIS]</scope>
    <source>
        <tissue>Liver</tissue>
    </source>
</reference>
<reference key="20">
    <citation type="journal article" date="2014" name="Mol. Cell. Proteomics">
        <title>Immunoaffinity enrichment and mass spectrometry analysis of protein methylation.</title>
        <authorList>
            <person name="Guo A."/>
            <person name="Gu H."/>
            <person name="Zhou J."/>
            <person name="Mulhern D."/>
            <person name="Wang Y."/>
            <person name="Lee K.A."/>
            <person name="Yang V."/>
            <person name="Aguiar M."/>
            <person name="Kornhauser J."/>
            <person name="Jia X."/>
            <person name="Ren J."/>
            <person name="Beausoleil S.A."/>
            <person name="Silva J.C."/>
            <person name="Vemulapalli V."/>
            <person name="Bedford M.T."/>
            <person name="Comb M.J."/>
        </authorList>
    </citation>
    <scope>METHYLATION [LARGE SCALE ANALYSIS] AT ARG-16 AND ARG-24</scope>
    <scope>IDENTIFICATION BY MASS SPECTROMETRY [LARGE SCALE ANALYSIS]</scope>
    <source>
        <tissue>Colon carcinoma</tissue>
    </source>
</reference>
<reference key="21">
    <citation type="journal article" date="2015" name="Proteomics">
        <title>N-terminome analysis of the human mitochondrial proteome.</title>
        <authorList>
            <person name="Vaca Jacome A.S."/>
            <person name="Rabilloud T."/>
            <person name="Schaeffer-Reiss C."/>
            <person name="Rompais M."/>
            <person name="Ayoub D."/>
            <person name="Lane L."/>
            <person name="Bairoch A."/>
            <person name="Van Dorsselaer A."/>
            <person name="Carapito C."/>
        </authorList>
    </citation>
    <scope>IDENTIFICATION BY MASS SPECTROMETRY [LARGE SCALE ANALYSIS]</scope>
</reference>
<reference key="22">
    <citation type="journal article" date="2016" name="Viruses">
        <title>NF45 and NF90 Bind HIV-1 RNA and Modulate HIV Gene Expression.</title>
        <authorList>
            <person name="Li Y."/>
            <person name="Belshan M."/>
        </authorList>
    </citation>
    <scope>FUNCTION (MICROBIAL INFECTION)</scope>
</reference>
<reference key="23">
    <citation type="journal article" date="2017" name="Nat. Struct. Mol. Biol.">
        <title>Site-specific mapping of the human SUMO proteome reveals co-modification with phosphorylation.</title>
        <authorList>
            <person name="Hendriks I.A."/>
            <person name="Lyon D."/>
            <person name="Young C."/>
            <person name="Jensen L.J."/>
            <person name="Vertegaal A.C."/>
            <person name="Nielsen M.L."/>
        </authorList>
    </citation>
    <scope>SUMOYLATION [LARGE SCALE ANALYSIS] AT LYS-186 AND LYS-364</scope>
    <scope>IDENTIFICATION BY MASS SPECTROMETRY [LARGE SCALE ANALYSIS]</scope>
</reference>
<reference key="24">
    <citation type="journal article" date="2019" name="Viruses">
        <title>Cellular Interleukin Enhancer-Binding Factor 2, ILF2, Inhibits Japanese Encephalitis Virus Replication In Vitro.</title>
        <authorList>
            <person name="Cui X."/>
            <person name="Qian P."/>
            <person name="Rao T."/>
            <person name="Wei Y."/>
            <person name="Zhao F."/>
            <person name="Zhang H."/>
            <person name="Chen H."/>
            <person name="Li X."/>
        </authorList>
    </citation>
    <scope>FUNCTION</scope>
    <scope>INTERACTION WITH JAPANESE ENCEPHALITIS VIRUS NS3 (MICROBIAL INFECTION)</scope>
    <scope>SUBCELLULAR LOCATION</scope>
</reference>
<reference key="25">
    <citation type="journal article" date="2019" name="Viruses">
        <title>Enterovirus 71 Represses Interleukin Enhancer-Binding Factor 2 Production and Nucleus Translocation to Antagonize ILF2 Antiviral Effects.</title>
        <authorList>
            <person name="Jin J."/>
            <person name="Wang W."/>
            <person name="Ai S."/>
            <person name="Liu W."/>
            <person name="Song Y."/>
            <person name="Luo Z."/>
            <person name="Zhang Q."/>
            <person name="Wu K."/>
            <person name="Liu Y."/>
            <person name="Wu J."/>
        </authorList>
    </citation>
    <scope>FUNCTION</scope>
    <scope>INTERACTION WITH ENTEROVIRUS 71 PROTEIN 2B (MICROBIAL INFECTION)</scope>
    <scope>SUBCELLULAR LOCATION</scope>
</reference>
<reference key="26">
    <citation type="journal article" date="2020" name="Cell Rep.">
        <title>NF45 and NF90 Regulate Mitotic Gene Expression by Competing with Staufen-Mediated mRNA Decay.</title>
        <authorList>
            <person name="Nourreddine S."/>
            <person name="Lavoie G."/>
            <person name="Paradis J."/>
            <person name="Ben El Kadhi K."/>
            <person name="Meant A."/>
            <person name="Aubert L."/>
            <person name="Grondin B."/>
            <person name="Gendron P."/>
            <person name="Chabot B."/>
            <person name="Bouvier M."/>
            <person name="Carreno S."/>
            <person name="Roux P.P."/>
        </authorList>
    </citation>
    <scope>FUNCTION</scope>
</reference>
<reference key="27">
    <citation type="journal article" date="2020" name="Protein J.">
        <title>Cereblon Promotes the Ubiquitination and Proteasomal Degradation of Interleukin Enhancer-Binding Factor 2.</title>
        <authorList>
            <person name="Lian Q."/>
            <person name="Gao Y."/>
            <person name="Li Q."/>
            <person name="He X."/>
            <person name="Jiang X."/>
            <person name="Pu Z."/>
            <person name="Xu G."/>
        </authorList>
    </citation>
    <scope>UBIQUITINATION AT LYS-45</scope>
    <scope>MUTAGENESIS OF LYS-45</scope>
    <scope>INTERACTION WITH CRBN</scope>
</reference>